<evidence type="ECO:0000255" key="1">
    <source>
        <dbReference type="HAMAP-Rule" id="MF_00372"/>
    </source>
</evidence>
<organism>
    <name type="scientific">Pseudomonas putida (strain ATCC 47054 / DSM 6125 / CFBP 8728 / NCIMB 11950 / KT2440)</name>
    <dbReference type="NCBI Taxonomy" id="160488"/>
    <lineage>
        <taxon>Bacteria</taxon>
        <taxon>Pseudomonadati</taxon>
        <taxon>Pseudomonadota</taxon>
        <taxon>Gammaproteobacteria</taxon>
        <taxon>Pseudomonadales</taxon>
        <taxon>Pseudomonadaceae</taxon>
        <taxon>Pseudomonas</taxon>
    </lineage>
</organism>
<accession>Q88CZ9</accession>
<gene>
    <name evidence="1" type="primary">hutI</name>
    <name type="ordered locus">PP_5030</name>
</gene>
<proteinExistence type="inferred from homology"/>
<keyword id="KW-0963">Cytoplasm</keyword>
<keyword id="KW-0369">Histidine metabolism</keyword>
<keyword id="KW-0378">Hydrolase</keyword>
<keyword id="KW-0408">Iron</keyword>
<keyword id="KW-0479">Metal-binding</keyword>
<keyword id="KW-1185">Reference proteome</keyword>
<keyword id="KW-0862">Zinc</keyword>
<dbReference type="EC" id="3.5.2.7" evidence="1"/>
<dbReference type="EMBL" id="AE015451">
    <property type="protein sequence ID" value="AAN70595.1"/>
    <property type="molecule type" value="Genomic_DNA"/>
</dbReference>
<dbReference type="RefSeq" id="NP_747131.1">
    <property type="nucleotide sequence ID" value="NC_002947.4"/>
</dbReference>
<dbReference type="RefSeq" id="WP_010955587.1">
    <property type="nucleotide sequence ID" value="NZ_CP169744.1"/>
</dbReference>
<dbReference type="SMR" id="Q88CZ9"/>
<dbReference type="STRING" id="160488.PP_5030"/>
<dbReference type="PaxDb" id="160488-PP_5030"/>
<dbReference type="GeneID" id="83682764"/>
<dbReference type="KEGG" id="ppu:PP_5030"/>
<dbReference type="PATRIC" id="fig|160488.4.peg.5371"/>
<dbReference type="eggNOG" id="COG1228">
    <property type="taxonomic scope" value="Bacteria"/>
</dbReference>
<dbReference type="HOGENOM" id="CLU_041647_0_0_6"/>
<dbReference type="OrthoDB" id="9776455at2"/>
<dbReference type="PhylomeDB" id="Q88CZ9"/>
<dbReference type="BioCyc" id="PPUT160488:G1G01-5375-MONOMER"/>
<dbReference type="UniPathway" id="UPA00379">
    <property type="reaction ID" value="UER00551"/>
</dbReference>
<dbReference type="Proteomes" id="UP000000556">
    <property type="component" value="Chromosome"/>
</dbReference>
<dbReference type="GO" id="GO:0005737">
    <property type="term" value="C:cytoplasm"/>
    <property type="evidence" value="ECO:0007669"/>
    <property type="project" value="UniProtKB-SubCell"/>
</dbReference>
<dbReference type="GO" id="GO:0050480">
    <property type="term" value="F:imidazolonepropionase activity"/>
    <property type="evidence" value="ECO:0007669"/>
    <property type="project" value="UniProtKB-UniRule"/>
</dbReference>
<dbReference type="GO" id="GO:0005506">
    <property type="term" value="F:iron ion binding"/>
    <property type="evidence" value="ECO:0007669"/>
    <property type="project" value="UniProtKB-UniRule"/>
</dbReference>
<dbReference type="GO" id="GO:0008270">
    <property type="term" value="F:zinc ion binding"/>
    <property type="evidence" value="ECO:0007669"/>
    <property type="project" value="UniProtKB-UniRule"/>
</dbReference>
<dbReference type="GO" id="GO:0019556">
    <property type="term" value="P:L-histidine catabolic process to glutamate and formamide"/>
    <property type="evidence" value="ECO:0007669"/>
    <property type="project" value="UniProtKB-UniPathway"/>
</dbReference>
<dbReference type="GO" id="GO:0019557">
    <property type="term" value="P:L-histidine catabolic process to glutamate and formate"/>
    <property type="evidence" value="ECO:0007669"/>
    <property type="project" value="UniProtKB-UniPathway"/>
</dbReference>
<dbReference type="CDD" id="cd01296">
    <property type="entry name" value="Imidazolone-5PH"/>
    <property type="match status" value="1"/>
</dbReference>
<dbReference type="FunFam" id="3.20.20.140:FF:000007">
    <property type="entry name" value="Imidazolonepropionase"/>
    <property type="match status" value="1"/>
</dbReference>
<dbReference type="Gene3D" id="3.20.20.140">
    <property type="entry name" value="Metal-dependent hydrolases"/>
    <property type="match status" value="1"/>
</dbReference>
<dbReference type="Gene3D" id="2.30.40.10">
    <property type="entry name" value="Urease, subunit C, domain 1"/>
    <property type="match status" value="1"/>
</dbReference>
<dbReference type="HAMAP" id="MF_00372">
    <property type="entry name" value="HutI"/>
    <property type="match status" value="1"/>
</dbReference>
<dbReference type="InterPro" id="IPR006680">
    <property type="entry name" value="Amidohydro-rel"/>
</dbReference>
<dbReference type="InterPro" id="IPR005920">
    <property type="entry name" value="HutI"/>
</dbReference>
<dbReference type="InterPro" id="IPR011059">
    <property type="entry name" value="Metal-dep_hydrolase_composite"/>
</dbReference>
<dbReference type="InterPro" id="IPR032466">
    <property type="entry name" value="Metal_Hydrolase"/>
</dbReference>
<dbReference type="NCBIfam" id="TIGR01224">
    <property type="entry name" value="hutI"/>
    <property type="match status" value="1"/>
</dbReference>
<dbReference type="PANTHER" id="PTHR42752">
    <property type="entry name" value="IMIDAZOLONEPROPIONASE"/>
    <property type="match status" value="1"/>
</dbReference>
<dbReference type="PANTHER" id="PTHR42752:SF1">
    <property type="entry name" value="IMIDAZOLONEPROPIONASE-RELATED"/>
    <property type="match status" value="1"/>
</dbReference>
<dbReference type="Pfam" id="PF01979">
    <property type="entry name" value="Amidohydro_1"/>
    <property type="match status" value="1"/>
</dbReference>
<dbReference type="SUPFAM" id="SSF51338">
    <property type="entry name" value="Composite domain of metallo-dependent hydrolases"/>
    <property type="match status" value="1"/>
</dbReference>
<dbReference type="SUPFAM" id="SSF51556">
    <property type="entry name" value="Metallo-dependent hydrolases"/>
    <property type="match status" value="1"/>
</dbReference>
<sequence length="401" mass="42994">MRTLWQHCHVATMADGRYSAIEDAAIVTSAGLIEWIGPRAELAPVEADRTVDLGGAWVTPGLIDCHTHAVFGGNRSGEFEQRLQGVSYAEIAAQGGGIASTVRATRAASEDELFASAHQRVQALMRDGVTTLEIKSGYGLDLANERKMLRVARRLADELPLTVRATCLAAHALPPEYAGRADDYIAHICDEMLPALAGEGLVDAVDAFCEHLAFSPAQVERLFIKARELGLPVKLHAEQLSSLHGSSLAARYQALSADHLEFMTEEDAVAMASAGTVAVLLPGAFYFLRETQLPPMDALRRHGVKIALASDLNPGTSPGLSLRLMLNMGCTCFRMTPEEALAGVTVHAATALGLGDSHGSLQVGKVADFVAWQIERPADLAYWLGGDLPKRVVRMGHEISN</sequence>
<protein>
    <recommendedName>
        <fullName evidence="1">Imidazolonepropionase</fullName>
        <ecNumber evidence="1">3.5.2.7</ecNumber>
    </recommendedName>
    <alternativeName>
        <fullName evidence="1">Imidazolone-5-propionate hydrolase</fullName>
    </alternativeName>
</protein>
<feature type="chain" id="PRO_0000160951" description="Imidazolonepropionase">
    <location>
        <begin position="1"/>
        <end position="401"/>
    </location>
</feature>
<feature type="binding site" evidence="1">
    <location>
        <position position="66"/>
    </location>
    <ligand>
        <name>Fe(3+)</name>
        <dbReference type="ChEBI" id="CHEBI:29034"/>
    </ligand>
</feature>
<feature type="binding site" evidence="1">
    <location>
        <position position="66"/>
    </location>
    <ligand>
        <name>Zn(2+)</name>
        <dbReference type="ChEBI" id="CHEBI:29105"/>
    </ligand>
</feature>
<feature type="binding site" evidence="1">
    <location>
        <position position="68"/>
    </location>
    <ligand>
        <name>Fe(3+)</name>
        <dbReference type="ChEBI" id="CHEBI:29034"/>
    </ligand>
</feature>
<feature type="binding site" evidence="1">
    <location>
        <position position="68"/>
    </location>
    <ligand>
        <name>Zn(2+)</name>
        <dbReference type="ChEBI" id="CHEBI:29105"/>
    </ligand>
</feature>
<feature type="binding site" evidence="1">
    <location>
        <position position="75"/>
    </location>
    <ligand>
        <name>4-imidazolone-5-propanoate</name>
        <dbReference type="ChEBI" id="CHEBI:77893"/>
    </ligand>
</feature>
<feature type="binding site" evidence="1">
    <location>
        <position position="138"/>
    </location>
    <ligand>
        <name>4-imidazolone-5-propanoate</name>
        <dbReference type="ChEBI" id="CHEBI:77893"/>
    </ligand>
</feature>
<feature type="binding site" evidence="1">
    <location>
        <position position="138"/>
    </location>
    <ligand>
        <name>N-formimidoyl-L-glutamate</name>
        <dbReference type="ChEBI" id="CHEBI:58928"/>
    </ligand>
</feature>
<feature type="binding site" evidence="1">
    <location>
        <position position="171"/>
    </location>
    <ligand>
        <name>4-imidazolone-5-propanoate</name>
        <dbReference type="ChEBI" id="CHEBI:77893"/>
    </ligand>
</feature>
<feature type="binding site" evidence="1">
    <location>
        <position position="236"/>
    </location>
    <ligand>
        <name>Fe(3+)</name>
        <dbReference type="ChEBI" id="CHEBI:29034"/>
    </ligand>
</feature>
<feature type="binding site" evidence="1">
    <location>
        <position position="236"/>
    </location>
    <ligand>
        <name>Zn(2+)</name>
        <dbReference type="ChEBI" id="CHEBI:29105"/>
    </ligand>
</feature>
<feature type="binding site" evidence="1">
    <location>
        <position position="239"/>
    </location>
    <ligand>
        <name>4-imidazolone-5-propanoate</name>
        <dbReference type="ChEBI" id="CHEBI:77893"/>
    </ligand>
</feature>
<feature type="binding site" evidence="1">
    <location>
        <position position="311"/>
    </location>
    <ligand>
        <name>Fe(3+)</name>
        <dbReference type="ChEBI" id="CHEBI:29034"/>
    </ligand>
</feature>
<feature type="binding site" evidence="1">
    <location>
        <position position="311"/>
    </location>
    <ligand>
        <name>Zn(2+)</name>
        <dbReference type="ChEBI" id="CHEBI:29105"/>
    </ligand>
</feature>
<feature type="binding site" evidence="1">
    <location>
        <position position="313"/>
    </location>
    <ligand>
        <name>N-formimidoyl-L-glutamate</name>
        <dbReference type="ChEBI" id="CHEBI:58928"/>
    </ligand>
</feature>
<feature type="binding site" evidence="1">
    <location>
        <position position="315"/>
    </location>
    <ligand>
        <name>N-formimidoyl-L-glutamate</name>
        <dbReference type="ChEBI" id="CHEBI:58928"/>
    </ligand>
</feature>
<feature type="binding site" evidence="1">
    <location>
        <position position="316"/>
    </location>
    <ligand>
        <name>4-imidazolone-5-propanoate</name>
        <dbReference type="ChEBI" id="CHEBI:77893"/>
    </ligand>
</feature>
<comment type="function">
    <text evidence="1">Catalyzes the hydrolytic cleavage of the carbon-nitrogen bond in imidazolone-5-propanoate to yield N-formimidoyl-L-glutamate. It is the third step in the universal histidine degradation pathway.</text>
</comment>
<comment type="catalytic activity">
    <reaction evidence="1">
        <text>4-imidazolone-5-propanoate + H2O = N-formimidoyl-L-glutamate</text>
        <dbReference type="Rhea" id="RHEA:23660"/>
        <dbReference type="ChEBI" id="CHEBI:15377"/>
        <dbReference type="ChEBI" id="CHEBI:58928"/>
        <dbReference type="ChEBI" id="CHEBI:77893"/>
        <dbReference type="EC" id="3.5.2.7"/>
    </reaction>
</comment>
<comment type="cofactor">
    <cofactor evidence="1">
        <name>Zn(2+)</name>
        <dbReference type="ChEBI" id="CHEBI:29105"/>
    </cofactor>
    <cofactor evidence="1">
        <name>Fe(3+)</name>
        <dbReference type="ChEBI" id="CHEBI:29034"/>
    </cofactor>
    <text evidence="1">Binds 1 zinc or iron ion per subunit.</text>
</comment>
<comment type="pathway">
    <text evidence="1">Amino-acid degradation; L-histidine degradation into L-glutamate; N-formimidoyl-L-glutamate from L-histidine: step 3/3.</text>
</comment>
<comment type="subcellular location">
    <subcellularLocation>
        <location evidence="1">Cytoplasm</location>
    </subcellularLocation>
</comment>
<comment type="similarity">
    <text evidence="1">Belongs to the metallo-dependent hydrolases superfamily. HutI family.</text>
</comment>
<name>HUTI_PSEPK</name>
<reference key="1">
    <citation type="journal article" date="2002" name="Environ. Microbiol.">
        <title>Complete genome sequence and comparative analysis of the metabolically versatile Pseudomonas putida KT2440.</title>
        <authorList>
            <person name="Nelson K.E."/>
            <person name="Weinel C."/>
            <person name="Paulsen I.T."/>
            <person name="Dodson R.J."/>
            <person name="Hilbert H."/>
            <person name="Martins dos Santos V.A.P."/>
            <person name="Fouts D.E."/>
            <person name="Gill S.R."/>
            <person name="Pop M."/>
            <person name="Holmes M."/>
            <person name="Brinkac L.M."/>
            <person name="Beanan M.J."/>
            <person name="DeBoy R.T."/>
            <person name="Daugherty S.C."/>
            <person name="Kolonay J.F."/>
            <person name="Madupu R."/>
            <person name="Nelson W.C."/>
            <person name="White O."/>
            <person name="Peterson J.D."/>
            <person name="Khouri H.M."/>
            <person name="Hance I."/>
            <person name="Chris Lee P."/>
            <person name="Holtzapple E.K."/>
            <person name="Scanlan D."/>
            <person name="Tran K."/>
            <person name="Moazzez A."/>
            <person name="Utterback T.R."/>
            <person name="Rizzo M."/>
            <person name="Lee K."/>
            <person name="Kosack D."/>
            <person name="Moestl D."/>
            <person name="Wedler H."/>
            <person name="Lauber J."/>
            <person name="Stjepandic D."/>
            <person name="Hoheisel J."/>
            <person name="Straetz M."/>
            <person name="Heim S."/>
            <person name="Kiewitz C."/>
            <person name="Eisen J.A."/>
            <person name="Timmis K.N."/>
            <person name="Duesterhoeft A."/>
            <person name="Tuemmler B."/>
            <person name="Fraser C.M."/>
        </authorList>
    </citation>
    <scope>NUCLEOTIDE SEQUENCE [LARGE SCALE GENOMIC DNA]</scope>
    <source>
        <strain>ATCC 47054 / DSM 6125 / CFBP 8728 / NCIMB 11950 / KT2440</strain>
    </source>
</reference>